<organism>
    <name type="scientific">Arabidopsis thaliana</name>
    <name type="common">Mouse-ear cress</name>
    <dbReference type="NCBI Taxonomy" id="3702"/>
    <lineage>
        <taxon>Eukaryota</taxon>
        <taxon>Viridiplantae</taxon>
        <taxon>Streptophyta</taxon>
        <taxon>Embryophyta</taxon>
        <taxon>Tracheophyta</taxon>
        <taxon>Spermatophyta</taxon>
        <taxon>Magnoliopsida</taxon>
        <taxon>eudicotyledons</taxon>
        <taxon>Gunneridae</taxon>
        <taxon>Pentapetalae</taxon>
        <taxon>rosids</taxon>
        <taxon>malvids</taxon>
        <taxon>Brassicales</taxon>
        <taxon>Brassicaceae</taxon>
        <taxon>Camelineae</taxon>
        <taxon>Arabidopsis</taxon>
    </lineage>
</organism>
<reference key="1">
    <citation type="journal article" date="1999" name="Nature">
        <title>Sequence and analysis of chromosome 2 of the plant Arabidopsis thaliana.</title>
        <authorList>
            <person name="Lin X."/>
            <person name="Kaul S."/>
            <person name="Rounsley S.D."/>
            <person name="Shea T.P."/>
            <person name="Benito M.-I."/>
            <person name="Town C.D."/>
            <person name="Fujii C.Y."/>
            <person name="Mason T.M."/>
            <person name="Bowman C.L."/>
            <person name="Barnstead M.E."/>
            <person name="Feldblyum T.V."/>
            <person name="Buell C.R."/>
            <person name="Ketchum K.A."/>
            <person name="Lee J.J."/>
            <person name="Ronning C.M."/>
            <person name="Koo H.L."/>
            <person name="Moffat K.S."/>
            <person name="Cronin L.A."/>
            <person name="Shen M."/>
            <person name="Pai G."/>
            <person name="Van Aken S."/>
            <person name="Umayam L."/>
            <person name="Tallon L.J."/>
            <person name="Gill J.E."/>
            <person name="Adams M.D."/>
            <person name="Carrera A.J."/>
            <person name="Creasy T.H."/>
            <person name="Goodman H.M."/>
            <person name="Somerville C.R."/>
            <person name="Copenhaver G.P."/>
            <person name="Preuss D."/>
            <person name="Nierman W.C."/>
            <person name="White O."/>
            <person name="Eisen J.A."/>
            <person name="Salzberg S.L."/>
            <person name="Fraser C.M."/>
            <person name="Venter J.C."/>
        </authorList>
    </citation>
    <scope>NUCLEOTIDE SEQUENCE [LARGE SCALE GENOMIC DNA]</scope>
    <source>
        <strain>cv. Columbia</strain>
    </source>
</reference>
<reference key="2">
    <citation type="journal article" date="2017" name="Plant J.">
        <title>Araport11: a complete reannotation of the Arabidopsis thaliana reference genome.</title>
        <authorList>
            <person name="Cheng C.Y."/>
            <person name="Krishnakumar V."/>
            <person name="Chan A.P."/>
            <person name="Thibaud-Nissen F."/>
            <person name="Schobel S."/>
            <person name="Town C.D."/>
        </authorList>
    </citation>
    <scope>GENOME REANNOTATION</scope>
    <source>
        <strain>cv. Columbia</strain>
    </source>
</reference>
<reference key="3">
    <citation type="submission" date="2008-06" db="EMBL/GenBank/DDBJ databases">
        <title>Arabidopsis ORF clones.</title>
        <authorList>
            <person name="De Los Reyes C."/>
            <person name="Quan R."/>
            <person name="Chen H."/>
            <person name="Bautista V.R."/>
            <person name="Kim C.J."/>
            <person name="Ecker J.R."/>
        </authorList>
    </citation>
    <scope>NUCLEOTIDE SEQUENCE [LARGE SCALE MRNA]</scope>
    <source>
        <strain>cv. Columbia</strain>
    </source>
</reference>
<reference key="4">
    <citation type="journal article" date="2002" name="Trends Plant Sci.">
        <title>The Dof family of plant transcription factors.</title>
        <authorList>
            <person name="Yanagisawa S."/>
        </authorList>
    </citation>
    <scope>GENE FAMILY</scope>
    <scope>NOMENCLATURE</scope>
</reference>
<feature type="chain" id="PRO_0000074273" description="Dof zinc finger protein DOF2.2">
    <location>
        <begin position="1"/>
        <end position="340"/>
    </location>
</feature>
<feature type="zinc finger region" description="Dof-type" evidence="2">
    <location>
        <begin position="94"/>
        <end position="148"/>
    </location>
</feature>
<feature type="region of interest" description="Disordered" evidence="3">
    <location>
        <begin position="12"/>
        <end position="33"/>
    </location>
</feature>
<feature type="region of interest" description="Disordered" evidence="3">
    <location>
        <begin position="138"/>
        <end position="180"/>
    </location>
</feature>
<feature type="region of interest" description="Disordered" evidence="3">
    <location>
        <begin position="301"/>
        <end position="340"/>
    </location>
</feature>
<feature type="compositionally biased region" description="Low complexity" evidence="3">
    <location>
        <begin position="151"/>
        <end position="165"/>
    </location>
</feature>
<feature type="compositionally biased region" description="Polar residues" evidence="3">
    <location>
        <begin position="166"/>
        <end position="180"/>
    </location>
</feature>
<feature type="compositionally biased region" description="Polar residues" evidence="3">
    <location>
        <begin position="309"/>
        <end position="331"/>
    </location>
</feature>
<feature type="binding site" evidence="2">
    <location>
        <position position="96"/>
    </location>
    <ligand>
        <name>Zn(2+)</name>
        <dbReference type="ChEBI" id="CHEBI:29105"/>
    </ligand>
</feature>
<feature type="binding site" evidence="2">
    <location>
        <position position="99"/>
    </location>
    <ligand>
        <name>Zn(2+)</name>
        <dbReference type="ChEBI" id="CHEBI:29105"/>
    </ligand>
</feature>
<feature type="binding site" evidence="2">
    <location>
        <position position="121"/>
    </location>
    <ligand>
        <name>Zn(2+)</name>
        <dbReference type="ChEBI" id="CHEBI:29105"/>
    </ligand>
</feature>
<feature type="binding site" evidence="2">
    <location>
        <position position="124"/>
    </location>
    <ligand>
        <name>Zn(2+)</name>
        <dbReference type="ChEBI" id="CHEBI:29105"/>
    </ligand>
</feature>
<proteinExistence type="evidence at transcript level"/>
<gene>
    <name type="primary">DOF2.2</name>
    <name type="ordered locus">At2g28810</name>
    <name type="ORF">F8N16.10</name>
</gene>
<evidence type="ECO:0000250" key="1"/>
<evidence type="ECO:0000255" key="2">
    <source>
        <dbReference type="PROSITE-ProRule" id="PRU00071"/>
    </source>
</evidence>
<evidence type="ECO:0000256" key="3">
    <source>
        <dbReference type="SAM" id="MobiDB-lite"/>
    </source>
</evidence>
<evidence type="ECO:0000305" key="4"/>
<sequence>MVFSSVSSFLDPPINWPQSANPNNHPHHHQLQENGSLVSGHHQVLSHHFPQNPNPNHHHVETAAATTVDPSSLNGQAAERARLAKNSQPPEGALKCPRCDSANTKFCYFNNYNLTQPRHFCKACRRYWTRGGALRNVPVGGGCRRNKKGKSGNSKSSSSSQNKQSTSMVNATSPTNTSNVQLQTNSQFPFLPTLQNLTQLGGIGLNLAAINGNNGGNGNTSSSFLNDLGFFHGGNTSGPVMGNNNENNLMTSLGSSSHFALFDRTMGLYNFPNEVNMGLSSIGATRVSQTAQVKMEDNHLGNISRPVSGLTSPGNQSNQYWTGQGLPGSSSNDHHHQHLM</sequence>
<dbReference type="EMBL" id="AC005727">
    <property type="protein sequence ID" value="AAC79586.1"/>
    <property type="status" value="ALT_SEQ"/>
    <property type="molecule type" value="Genomic_DNA"/>
</dbReference>
<dbReference type="EMBL" id="CP002685">
    <property type="protein sequence ID" value="AEC08176.1"/>
    <property type="molecule type" value="Genomic_DNA"/>
</dbReference>
<dbReference type="EMBL" id="BT032877">
    <property type="protein sequence ID" value="ACD89067.1"/>
    <property type="molecule type" value="mRNA"/>
</dbReference>
<dbReference type="PIR" id="B84689">
    <property type="entry name" value="B84689"/>
</dbReference>
<dbReference type="RefSeq" id="NP_850126.1">
    <molecule id="Q9ZV33-1"/>
    <property type="nucleotide sequence ID" value="NM_179795.2"/>
</dbReference>
<dbReference type="FunCoup" id="Q9ZV33">
    <property type="interactions" value="3"/>
</dbReference>
<dbReference type="IntAct" id="Q9ZV33">
    <property type="interactions" value="2"/>
</dbReference>
<dbReference type="STRING" id="3702.Q9ZV33"/>
<dbReference type="PaxDb" id="3702-AT2G28810.1"/>
<dbReference type="EnsemblPlants" id="AT2G28810.1">
    <molecule id="Q9ZV33-1"/>
    <property type="protein sequence ID" value="AT2G28810.1"/>
    <property type="gene ID" value="AT2G28810"/>
</dbReference>
<dbReference type="GeneID" id="817430"/>
<dbReference type="Gramene" id="AT2G28810.1">
    <molecule id="Q9ZV33-1"/>
    <property type="protein sequence ID" value="AT2G28810.1"/>
    <property type="gene ID" value="AT2G28810"/>
</dbReference>
<dbReference type="KEGG" id="ath:AT2G28810"/>
<dbReference type="Araport" id="AT2G28810"/>
<dbReference type="TAIR" id="AT2G28810"/>
<dbReference type="eggNOG" id="ENOG502RPNM">
    <property type="taxonomic scope" value="Eukaryota"/>
</dbReference>
<dbReference type="HOGENOM" id="CLU_036438_0_3_1"/>
<dbReference type="InParanoid" id="Q9ZV33"/>
<dbReference type="OMA" id="QYWPGLT"/>
<dbReference type="OrthoDB" id="1927254at2759"/>
<dbReference type="PhylomeDB" id="Q9ZV33"/>
<dbReference type="PRO" id="PR:Q9ZV33"/>
<dbReference type="Proteomes" id="UP000006548">
    <property type="component" value="Chromosome 2"/>
</dbReference>
<dbReference type="ExpressionAtlas" id="Q9ZV33">
    <property type="expression patterns" value="baseline and differential"/>
</dbReference>
<dbReference type="GO" id="GO:0005634">
    <property type="term" value="C:nucleus"/>
    <property type="evidence" value="ECO:0000314"/>
    <property type="project" value="TAIR"/>
</dbReference>
<dbReference type="GO" id="GO:0003700">
    <property type="term" value="F:DNA-binding transcription factor activity"/>
    <property type="evidence" value="ECO:0000250"/>
    <property type="project" value="TAIR"/>
</dbReference>
<dbReference type="GO" id="GO:0000976">
    <property type="term" value="F:transcription cis-regulatory region binding"/>
    <property type="evidence" value="ECO:0000353"/>
    <property type="project" value="TAIR"/>
</dbReference>
<dbReference type="GO" id="GO:0008270">
    <property type="term" value="F:zinc ion binding"/>
    <property type="evidence" value="ECO:0007669"/>
    <property type="project" value="UniProtKB-KW"/>
</dbReference>
<dbReference type="GO" id="GO:0006355">
    <property type="term" value="P:regulation of DNA-templated transcription"/>
    <property type="evidence" value="ECO:0000304"/>
    <property type="project" value="TAIR"/>
</dbReference>
<dbReference type="InterPro" id="IPR045174">
    <property type="entry name" value="Dof"/>
</dbReference>
<dbReference type="InterPro" id="IPR003851">
    <property type="entry name" value="Znf_Dof"/>
</dbReference>
<dbReference type="PANTHER" id="PTHR31992">
    <property type="entry name" value="DOF ZINC FINGER PROTEIN DOF1.4-RELATED"/>
    <property type="match status" value="1"/>
</dbReference>
<dbReference type="PANTHER" id="PTHR31992:SF107">
    <property type="entry name" value="DOF ZINC FINGER PROTEIN DOF2.2"/>
    <property type="match status" value="1"/>
</dbReference>
<dbReference type="Pfam" id="PF02701">
    <property type="entry name" value="Zn_ribbon_Dof"/>
    <property type="match status" value="1"/>
</dbReference>
<dbReference type="PROSITE" id="PS01361">
    <property type="entry name" value="ZF_DOF_1"/>
    <property type="match status" value="1"/>
</dbReference>
<dbReference type="PROSITE" id="PS50884">
    <property type="entry name" value="ZF_DOF_2"/>
    <property type="match status" value="1"/>
</dbReference>
<keyword id="KW-0025">Alternative splicing</keyword>
<keyword id="KW-0238">DNA-binding</keyword>
<keyword id="KW-0479">Metal-binding</keyword>
<keyword id="KW-0539">Nucleus</keyword>
<keyword id="KW-1185">Reference proteome</keyword>
<keyword id="KW-0804">Transcription</keyword>
<keyword id="KW-0805">Transcription regulation</keyword>
<keyword id="KW-0862">Zinc</keyword>
<keyword id="KW-0863">Zinc-finger</keyword>
<comment type="function">
    <text evidence="1">Transcription factor that binds specifically to a 5'-AA[AG]G-3' consensus core sequence.</text>
</comment>
<comment type="subcellular location">
    <subcellularLocation>
        <location evidence="4">Nucleus</location>
    </subcellularLocation>
</comment>
<comment type="alternative products">
    <event type="alternative splicing"/>
    <isoform>
        <id>Q9ZV33-1</id>
        <name>1</name>
        <sequence type="displayed"/>
    </isoform>
    <text>A number of isoforms are produced. According to EST sequences.</text>
</comment>
<comment type="sequence caution" evidence="4">
    <conflict type="erroneous gene model prediction">
        <sequence resource="EMBL-CDS" id="AAC79586"/>
    </conflict>
</comment>
<accession>Q9ZV33</accession>
<accession>B3DN89</accession>
<protein>
    <recommendedName>
        <fullName>Dof zinc finger protein DOF2.2</fullName>
        <shortName>AtDOF2.2</shortName>
    </recommendedName>
</protein>
<name>DOF22_ARATH</name>